<gene>
    <name evidence="1" type="primary">nusA</name>
    <name type="ordered locus">Rv2841c</name>
    <name type="ORF">MTCY16B7.01</name>
    <name type="ORF">MTCY24A1.16</name>
</gene>
<comment type="function">
    <text evidence="1">Participates in both transcription termination and antitermination.</text>
</comment>
<comment type="subunit">
    <text evidence="1 3 4">Monomer. Binds directly to the core enzyme of the DNA-dependent RNA polymerase and to nascent RNA.</text>
</comment>
<comment type="subcellular location">
    <subcellularLocation>
        <location evidence="1">Cytoplasm</location>
    </subcellularLocation>
</comment>
<comment type="domain">
    <text evidence="3 4">Contains an N-terminal region that probably interacts with RNA polymerase and a C-terminal region composed of 3 RNA binding domains, S1, KH 1 and KH 2.</text>
</comment>
<comment type="similarity">
    <text evidence="1">Belongs to the NusA family.</text>
</comment>
<name>NUSA_MYCTU</name>
<protein>
    <recommendedName>
        <fullName evidence="1">Transcription termination/antitermination protein NusA</fullName>
    </recommendedName>
</protein>
<sequence length="347" mass="37642">MNIDMAALHAIEVDRGISVNELLETIKSALLTAYRHTQGHQTDARIEIDRKTGVVRVIARETDEAGNLISEWDDTPEGFGRIAATTARQVMLQRFRDAENERTYGEFSTREGEIVAGVIQRDSRANARGLVVVRIGTETKASEGVIPAAEQVPGESYEHGNRLRCYVVGVTRGAREPLITLSRTHPNLVRKLFSLEVPEIADGSVEIVAVAREAGHRSKIAVRSNVAGLNAKGACIGPMGQRVRNVMSELSGEKIDIIDYDDDPARFVANALSPAKVVSVSVIDQTARAARVVVPDFQLSLAIGKEGQNARLAARLTGWRIDIRGDAPPPPPGQPEPGVSRGMAHDR</sequence>
<organism>
    <name type="scientific">Mycobacterium tuberculosis (strain ATCC 25618 / H37Rv)</name>
    <dbReference type="NCBI Taxonomy" id="83332"/>
    <lineage>
        <taxon>Bacteria</taxon>
        <taxon>Bacillati</taxon>
        <taxon>Actinomycetota</taxon>
        <taxon>Actinomycetes</taxon>
        <taxon>Mycobacteriales</taxon>
        <taxon>Mycobacteriaceae</taxon>
        <taxon>Mycobacterium</taxon>
        <taxon>Mycobacterium tuberculosis complex</taxon>
    </lineage>
</organism>
<accession>P9WIV3</accession>
<accession>L0TDQ4</accession>
<accession>O05818</accession>
<accession>P0A5M2</accession>
<feature type="chain" id="PRO_0000181974" description="Transcription termination/antitermination protein NusA">
    <location>
        <begin position="1"/>
        <end position="347"/>
    </location>
</feature>
<feature type="domain" description="S1 motif" evidence="1">
    <location>
        <begin position="112"/>
        <end position="184"/>
    </location>
</feature>
<feature type="domain" description="KH 1" evidence="1">
    <location>
        <begin position="220"/>
        <end position="286"/>
    </location>
</feature>
<feature type="domain" description="KH 2" evidence="1">
    <location>
        <begin position="287"/>
        <end position="347"/>
    </location>
</feature>
<feature type="region of interest" description="Disordered" evidence="2">
    <location>
        <begin position="322"/>
        <end position="347"/>
    </location>
</feature>
<feature type="helix" evidence="5">
    <location>
        <begin position="9"/>
        <end position="11"/>
    </location>
</feature>
<feature type="strand" evidence="5">
    <location>
        <begin position="12"/>
        <end position="14"/>
    </location>
</feature>
<feature type="turn" evidence="5">
    <location>
        <begin position="21"/>
        <end position="24"/>
    </location>
</feature>
<feature type="turn" evidence="5">
    <location>
        <begin position="27"/>
        <end position="31"/>
    </location>
</feature>
<feature type="helix" evidence="5">
    <location>
        <begin position="34"/>
        <end position="36"/>
    </location>
</feature>
<feature type="strand" evidence="5">
    <location>
        <begin position="37"/>
        <end position="39"/>
    </location>
</feature>
<feature type="strand" evidence="5">
    <location>
        <begin position="50"/>
        <end position="52"/>
    </location>
</feature>
<feature type="strand" evidence="5">
    <location>
        <begin position="64"/>
        <end position="67"/>
    </location>
</feature>
<feature type="turn" evidence="5">
    <location>
        <begin position="80"/>
        <end position="82"/>
    </location>
</feature>
<feature type="turn" evidence="5">
    <location>
        <begin position="84"/>
        <end position="88"/>
    </location>
</feature>
<feature type="helix" evidence="5">
    <location>
        <begin position="89"/>
        <end position="96"/>
    </location>
</feature>
<feature type="strand" evidence="6">
    <location>
        <begin position="114"/>
        <end position="120"/>
    </location>
</feature>
<feature type="helix" evidence="6">
    <location>
        <begin position="123"/>
        <end position="127"/>
    </location>
</feature>
<feature type="strand" evidence="6">
    <location>
        <begin position="131"/>
        <end position="135"/>
    </location>
</feature>
<feature type="strand" evidence="6">
    <location>
        <begin position="137"/>
        <end position="140"/>
    </location>
</feature>
<feature type="strand" evidence="6">
    <location>
        <begin position="142"/>
        <end position="146"/>
    </location>
</feature>
<feature type="helix" evidence="6">
    <location>
        <begin position="148"/>
        <end position="150"/>
    </location>
</feature>
<feature type="strand" evidence="6">
    <location>
        <begin position="162"/>
        <end position="171"/>
    </location>
</feature>
<feature type="strand" evidence="6">
    <location>
        <begin position="174"/>
        <end position="176"/>
    </location>
</feature>
<feature type="strand" evidence="6">
    <location>
        <begin position="178"/>
        <end position="184"/>
    </location>
</feature>
<feature type="helix" evidence="6">
    <location>
        <begin position="186"/>
        <end position="196"/>
    </location>
</feature>
<feature type="helix" evidence="6">
    <location>
        <begin position="198"/>
        <end position="201"/>
    </location>
</feature>
<feature type="strand" evidence="6">
    <location>
        <begin position="204"/>
        <end position="213"/>
    </location>
</feature>
<feature type="turn" evidence="6">
    <location>
        <begin position="214"/>
        <end position="216"/>
    </location>
</feature>
<feature type="strand" evidence="6">
    <location>
        <begin position="217"/>
        <end position="226"/>
    </location>
</feature>
<feature type="helix" evidence="6">
    <location>
        <begin position="231"/>
        <end position="236"/>
    </location>
</feature>
<feature type="helix" evidence="6">
    <location>
        <begin position="238"/>
        <end position="240"/>
    </location>
</feature>
<feature type="helix" evidence="6">
    <location>
        <begin position="241"/>
        <end position="249"/>
    </location>
</feature>
<feature type="turn" evidence="6">
    <location>
        <begin position="250"/>
        <end position="252"/>
    </location>
</feature>
<feature type="strand" evidence="6">
    <location>
        <begin position="254"/>
        <end position="259"/>
    </location>
</feature>
<feature type="helix" evidence="6">
    <location>
        <begin position="264"/>
        <end position="271"/>
    </location>
</feature>
<feature type="turn" evidence="6">
    <location>
        <begin position="272"/>
        <end position="274"/>
    </location>
</feature>
<feature type="strand" evidence="6">
    <location>
        <begin position="278"/>
        <end position="284"/>
    </location>
</feature>
<feature type="turn" evidence="6">
    <location>
        <begin position="285"/>
        <end position="288"/>
    </location>
</feature>
<feature type="strand" evidence="6">
    <location>
        <begin position="289"/>
        <end position="294"/>
    </location>
</feature>
<feature type="helix" evidence="6">
    <location>
        <begin position="296"/>
        <end position="298"/>
    </location>
</feature>
<feature type="helix" evidence="6">
    <location>
        <begin position="299"/>
        <end position="303"/>
    </location>
</feature>
<feature type="helix" evidence="6">
    <location>
        <begin position="305"/>
        <end position="307"/>
    </location>
</feature>
<feature type="helix" evidence="6">
    <location>
        <begin position="308"/>
        <end position="317"/>
    </location>
</feature>
<feature type="strand" evidence="6">
    <location>
        <begin position="320"/>
        <end position="327"/>
    </location>
</feature>
<evidence type="ECO:0000255" key="1">
    <source>
        <dbReference type="HAMAP-Rule" id="MF_00945"/>
    </source>
</evidence>
<evidence type="ECO:0000256" key="2">
    <source>
        <dbReference type="SAM" id="MobiDB-lite"/>
    </source>
</evidence>
<evidence type="ECO:0000269" key="3">
    <source>
    </source>
</evidence>
<evidence type="ECO:0000269" key="4">
    <source>
    </source>
</evidence>
<evidence type="ECO:0007829" key="5">
    <source>
        <dbReference type="PDB" id="1K0R"/>
    </source>
</evidence>
<evidence type="ECO:0007829" key="6">
    <source>
        <dbReference type="PDB" id="2ASB"/>
    </source>
</evidence>
<proteinExistence type="evidence at protein level"/>
<reference key="1">
    <citation type="journal article" date="1998" name="Nature">
        <title>Deciphering the biology of Mycobacterium tuberculosis from the complete genome sequence.</title>
        <authorList>
            <person name="Cole S.T."/>
            <person name="Brosch R."/>
            <person name="Parkhill J."/>
            <person name="Garnier T."/>
            <person name="Churcher C.M."/>
            <person name="Harris D.E."/>
            <person name="Gordon S.V."/>
            <person name="Eiglmeier K."/>
            <person name="Gas S."/>
            <person name="Barry C.E. III"/>
            <person name="Tekaia F."/>
            <person name="Badcock K."/>
            <person name="Basham D."/>
            <person name="Brown D."/>
            <person name="Chillingworth T."/>
            <person name="Connor R."/>
            <person name="Davies R.M."/>
            <person name="Devlin K."/>
            <person name="Feltwell T."/>
            <person name="Gentles S."/>
            <person name="Hamlin N."/>
            <person name="Holroyd S."/>
            <person name="Hornsby T."/>
            <person name="Jagels K."/>
            <person name="Krogh A."/>
            <person name="McLean J."/>
            <person name="Moule S."/>
            <person name="Murphy L.D."/>
            <person name="Oliver S."/>
            <person name="Osborne J."/>
            <person name="Quail M.A."/>
            <person name="Rajandream M.A."/>
            <person name="Rogers J."/>
            <person name="Rutter S."/>
            <person name="Seeger K."/>
            <person name="Skelton S."/>
            <person name="Squares S."/>
            <person name="Squares R."/>
            <person name="Sulston J.E."/>
            <person name="Taylor K."/>
            <person name="Whitehead S."/>
            <person name="Barrell B.G."/>
        </authorList>
    </citation>
    <scope>NUCLEOTIDE SEQUENCE [LARGE SCALE GENOMIC DNA]</scope>
    <source>
        <strain>ATCC 25618 / H37Rv</strain>
    </source>
</reference>
<reference key="2">
    <citation type="journal article" date="2011" name="Mol. Cell. Proteomics">
        <title>Proteogenomic analysis of Mycobacterium tuberculosis by high resolution mass spectrometry.</title>
        <authorList>
            <person name="Kelkar D.S."/>
            <person name="Kumar D."/>
            <person name="Kumar P."/>
            <person name="Balakrishnan L."/>
            <person name="Muthusamy B."/>
            <person name="Yadav A.K."/>
            <person name="Shrivastava P."/>
            <person name="Marimuthu A."/>
            <person name="Anand S."/>
            <person name="Sundaram H."/>
            <person name="Kingsbury R."/>
            <person name="Harsha H.C."/>
            <person name="Nair B."/>
            <person name="Prasad T.S."/>
            <person name="Chauhan D.S."/>
            <person name="Katoch K."/>
            <person name="Katoch V.M."/>
            <person name="Kumar P."/>
            <person name="Chaerkady R."/>
            <person name="Ramachandran S."/>
            <person name="Dash D."/>
            <person name="Pandey A."/>
        </authorList>
    </citation>
    <scope>IDENTIFICATION BY MASS SPECTROMETRY [LARGE SCALE ANALYSIS]</scope>
    <source>
        <strain>ATCC 25618 / H37Rv</strain>
    </source>
</reference>
<reference key="3">
    <citation type="journal article" date="2001" name="J. Mol. Biol.">
        <title>Crystal structure of the transcription elongation/anti-termination factor NusA from Mycobacterium tuberculosis at 1.7 A resolution.</title>
        <authorList>
            <person name="Gopal B."/>
            <person name="Haire L.F."/>
            <person name="Gamblin S.J."/>
            <person name="Dodson E.J."/>
            <person name="Lane A.N."/>
            <person name="Papavinasasundaram K.G."/>
            <person name="Colston M.J."/>
            <person name="Dodson G."/>
        </authorList>
    </citation>
    <scope>X-RAY CRYSTALLOGRAPHY (1.7 ANGSTROMS)</scope>
    <scope>SUBUNIT</scope>
    <scope>DOMAIN</scope>
</reference>
<reference key="4">
    <citation type="journal article" date="2005" name="EMBO J.">
        <title>Structure of a Mycobacterium tuberculosis NusA-RNA complex.</title>
        <authorList>
            <person name="Beuth B."/>
            <person name="Pennell S."/>
            <person name="Arnvig K.B."/>
            <person name="Martin S.R."/>
            <person name="Taylor I.A."/>
        </authorList>
    </citation>
    <scope>X-RAY CRYSTALLOGRAPHY (1.50 ANGSTROMS) OF 105-347 IN COMPLEX WITH RNA</scope>
    <scope>INTERACTION WITH RNA</scope>
    <scope>DOMAIN</scope>
</reference>
<dbReference type="EMBL" id="AL123456">
    <property type="protein sequence ID" value="CCP45642.1"/>
    <property type="molecule type" value="Genomic_DNA"/>
</dbReference>
<dbReference type="PIR" id="D70588">
    <property type="entry name" value="D70588"/>
</dbReference>
<dbReference type="RefSeq" id="NP_217357.1">
    <property type="nucleotide sequence ID" value="NC_000962.3"/>
</dbReference>
<dbReference type="RefSeq" id="WP_003414511.1">
    <property type="nucleotide sequence ID" value="NZ_NVQJ01000006.1"/>
</dbReference>
<dbReference type="PDB" id="1K0R">
    <property type="method" value="X-ray"/>
    <property type="resolution" value="1.70 A"/>
    <property type="chains" value="A/B=1-347"/>
</dbReference>
<dbReference type="PDB" id="2ASB">
    <property type="method" value="X-ray"/>
    <property type="resolution" value="1.50 A"/>
    <property type="chains" value="A=105-347"/>
</dbReference>
<dbReference type="PDB" id="2ATW">
    <property type="method" value="X-ray"/>
    <property type="resolution" value="2.25 A"/>
    <property type="chains" value="A/C=105-347"/>
</dbReference>
<dbReference type="PDBsum" id="1K0R"/>
<dbReference type="PDBsum" id="2ASB"/>
<dbReference type="PDBsum" id="2ATW"/>
<dbReference type="SMR" id="P9WIV3"/>
<dbReference type="FunCoup" id="P9WIV3">
    <property type="interactions" value="81"/>
</dbReference>
<dbReference type="STRING" id="83332.Rv2841c"/>
<dbReference type="PaxDb" id="83332-Rv2841c"/>
<dbReference type="DNASU" id="888213"/>
<dbReference type="GeneID" id="45426828"/>
<dbReference type="GeneID" id="888213"/>
<dbReference type="KEGG" id="mtu:Rv2841c"/>
<dbReference type="KEGG" id="mtv:RVBD_2841c"/>
<dbReference type="TubercuList" id="Rv2841c"/>
<dbReference type="eggNOG" id="COG0195">
    <property type="taxonomic scope" value="Bacteria"/>
</dbReference>
<dbReference type="InParanoid" id="P9WIV3"/>
<dbReference type="OrthoDB" id="9807233at2"/>
<dbReference type="PhylomeDB" id="P9WIV3"/>
<dbReference type="EvolutionaryTrace" id="P9WIV3"/>
<dbReference type="Proteomes" id="UP000001584">
    <property type="component" value="Chromosome"/>
</dbReference>
<dbReference type="GO" id="GO:0005829">
    <property type="term" value="C:cytosol"/>
    <property type="evidence" value="ECO:0000318"/>
    <property type="project" value="GO_Central"/>
</dbReference>
<dbReference type="GO" id="GO:0009274">
    <property type="term" value="C:peptidoglycan-based cell wall"/>
    <property type="evidence" value="ECO:0007005"/>
    <property type="project" value="MTBBASE"/>
</dbReference>
<dbReference type="GO" id="GO:0005886">
    <property type="term" value="C:plasma membrane"/>
    <property type="evidence" value="ECO:0007005"/>
    <property type="project" value="MTBBASE"/>
</dbReference>
<dbReference type="GO" id="GO:0003700">
    <property type="term" value="F:DNA-binding transcription factor activity"/>
    <property type="evidence" value="ECO:0007669"/>
    <property type="project" value="InterPro"/>
</dbReference>
<dbReference type="GO" id="GO:0003723">
    <property type="term" value="F:RNA binding"/>
    <property type="evidence" value="ECO:0000314"/>
    <property type="project" value="MTBBASE"/>
</dbReference>
<dbReference type="GO" id="GO:0006353">
    <property type="term" value="P:DNA-templated transcription termination"/>
    <property type="evidence" value="ECO:0007669"/>
    <property type="project" value="UniProtKB-UniRule"/>
</dbReference>
<dbReference type="GO" id="GO:0031564">
    <property type="term" value="P:transcription antitermination"/>
    <property type="evidence" value="ECO:0000314"/>
    <property type="project" value="MTBBASE"/>
</dbReference>
<dbReference type="CDD" id="cd02134">
    <property type="entry name" value="KH-II_NusA_rpt1"/>
    <property type="match status" value="1"/>
</dbReference>
<dbReference type="CDD" id="cd22529">
    <property type="entry name" value="KH-II_NusA_rpt2"/>
    <property type="match status" value="1"/>
</dbReference>
<dbReference type="CDD" id="cd04455">
    <property type="entry name" value="S1_NusA"/>
    <property type="match status" value="1"/>
</dbReference>
<dbReference type="FunFam" id="2.40.50.140:FF:000098">
    <property type="entry name" value="Transcription termination/antitermination protein NusA"/>
    <property type="match status" value="1"/>
</dbReference>
<dbReference type="FunFam" id="3.30.1480.10:FF:000004">
    <property type="entry name" value="Transcription termination/antitermination protein NusA"/>
    <property type="match status" value="1"/>
</dbReference>
<dbReference type="FunFam" id="3.30.300.20:FF:000002">
    <property type="entry name" value="Transcription termination/antitermination protein NusA"/>
    <property type="match status" value="1"/>
</dbReference>
<dbReference type="FunFam" id="3.30.300.20:FF:000005">
    <property type="entry name" value="Transcription termination/antitermination protein NusA"/>
    <property type="match status" value="1"/>
</dbReference>
<dbReference type="Gene3D" id="3.30.300.20">
    <property type="match status" value="2"/>
</dbReference>
<dbReference type="Gene3D" id="2.40.50.140">
    <property type="entry name" value="Nucleic acid-binding proteins"/>
    <property type="match status" value="1"/>
</dbReference>
<dbReference type="Gene3D" id="3.30.1480.10">
    <property type="entry name" value="NusA, N-terminal domain"/>
    <property type="match status" value="1"/>
</dbReference>
<dbReference type="HAMAP" id="MF_00945_B">
    <property type="entry name" value="NusA_B"/>
    <property type="match status" value="1"/>
</dbReference>
<dbReference type="InterPro" id="IPR015946">
    <property type="entry name" value="KH_dom-like_a/b"/>
</dbReference>
<dbReference type="InterPro" id="IPR025249">
    <property type="entry name" value="KH_dom_NusA-like"/>
</dbReference>
<dbReference type="InterPro" id="IPR009019">
    <property type="entry name" value="KH_sf_prok-type"/>
</dbReference>
<dbReference type="InterPro" id="IPR012340">
    <property type="entry name" value="NA-bd_OB-fold"/>
</dbReference>
<dbReference type="InterPro" id="IPR030842">
    <property type="entry name" value="NusA_bac"/>
</dbReference>
<dbReference type="InterPro" id="IPR036555">
    <property type="entry name" value="NusA_N_sf"/>
</dbReference>
<dbReference type="InterPro" id="IPR003029">
    <property type="entry name" value="S1_domain"/>
</dbReference>
<dbReference type="InterPro" id="IPR013735">
    <property type="entry name" value="TF_NusA_N"/>
</dbReference>
<dbReference type="InterPro" id="IPR010213">
    <property type="entry name" value="Tscrpt_termination_fac_NusA"/>
</dbReference>
<dbReference type="NCBIfam" id="TIGR01953">
    <property type="entry name" value="NusA"/>
    <property type="match status" value="1"/>
</dbReference>
<dbReference type="PANTHER" id="PTHR22648">
    <property type="entry name" value="TRANSCRIPTION TERMINATION FACTOR NUSA"/>
    <property type="match status" value="1"/>
</dbReference>
<dbReference type="PANTHER" id="PTHR22648:SF0">
    <property type="entry name" value="TRANSCRIPTION TERMINATION_ANTITERMINATION PROTEIN NUSA"/>
    <property type="match status" value="1"/>
</dbReference>
<dbReference type="Pfam" id="PF13184">
    <property type="entry name" value="KH_5"/>
    <property type="match status" value="1"/>
</dbReference>
<dbReference type="Pfam" id="PF08529">
    <property type="entry name" value="NusA_N"/>
    <property type="match status" value="2"/>
</dbReference>
<dbReference type="SMART" id="SM00316">
    <property type="entry name" value="S1"/>
    <property type="match status" value="1"/>
</dbReference>
<dbReference type="SUPFAM" id="SSF50249">
    <property type="entry name" value="Nucleic acid-binding proteins"/>
    <property type="match status" value="1"/>
</dbReference>
<dbReference type="SUPFAM" id="SSF54814">
    <property type="entry name" value="Prokaryotic type KH domain (KH-domain type II)"/>
    <property type="match status" value="2"/>
</dbReference>
<dbReference type="SUPFAM" id="SSF69705">
    <property type="entry name" value="Transcription factor NusA, N-terminal domain"/>
    <property type="match status" value="1"/>
</dbReference>
<dbReference type="PROSITE" id="PS50084">
    <property type="entry name" value="KH_TYPE_1"/>
    <property type="match status" value="1"/>
</dbReference>
<dbReference type="PROSITE" id="PS50126">
    <property type="entry name" value="S1"/>
    <property type="match status" value="1"/>
</dbReference>
<keyword id="KW-0002">3D-structure</keyword>
<keyword id="KW-0963">Cytoplasm</keyword>
<keyword id="KW-1185">Reference proteome</keyword>
<keyword id="KW-0677">Repeat</keyword>
<keyword id="KW-0694">RNA-binding</keyword>
<keyword id="KW-0804">Transcription</keyword>
<keyword id="KW-0889">Transcription antitermination</keyword>
<keyword id="KW-0805">Transcription regulation</keyword>
<keyword id="KW-0806">Transcription termination</keyword>